<evidence type="ECO:0000250" key="1"/>
<evidence type="ECO:0000305" key="2"/>
<accession>Q9ZE81</accession>
<gene>
    <name type="primary">argS</name>
    <name type="ordered locus">RP065</name>
</gene>
<feature type="chain" id="PRO_0000151600" description="Arginine--tRNA ligase">
    <location>
        <begin position="1"/>
        <end position="576"/>
    </location>
</feature>
<feature type="short sequence motif" description="'HIGH' region">
    <location>
        <begin position="126"/>
        <end position="136"/>
    </location>
</feature>
<proteinExistence type="inferred from homology"/>
<protein>
    <recommendedName>
        <fullName>Arginine--tRNA ligase</fullName>
        <ecNumber>6.1.1.19</ecNumber>
    </recommendedName>
    <alternativeName>
        <fullName>Arginyl-tRNA synthetase</fullName>
        <shortName>ArgRS</shortName>
    </alternativeName>
</protein>
<reference key="1">
    <citation type="journal article" date="1998" name="Nature">
        <title>The genome sequence of Rickettsia prowazekii and the origin of mitochondria.</title>
        <authorList>
            <person name="Andersson S.G.E."/>
            <person name="Zomorodipour A."/>
            <person name="Andersson J.O."/>
            <person name="Sicheritz-Ponten T."/>
            <person name="Alsmark U.C.M."/>
            <person name="Podowski R.M."/>
            <person name="Naeslund A.K."/>
            <person name="Eriksson A.-S."/>
            <person name="Winkler H.H."/>
            <person name="Kurland C.G."/>
        </authorList>
    </citation>
    <scope>NUCLEOTIDE SEQUENCE [LARGE SCALE GENOMIC DNA]</scope>
    <source>
        <strain>Madrid E</strain>
    </source>
</reference>
<dbReference type="EC" id="6.1.1.19"/>
<dbReference type="EMBL" id="AJ235270">
    <property type="protein sequence ID" value="CAA14536.1"/>
    <property type="molecule type" value="Genomic_DNA"/>
</dbReference>
<dbReference type="PIR" id="A71715">
    <property type="entry name" value="A71715"/>
</dbReference>
<dbReference type="RefSeq" id="NP_220459.1">
    <property type="nucleotide sequence ID" value="NC_000963.1"/>
</dbReference>
<dbReference type="RefSeq" id="WP_004599723.1">
    <property type="nucleotide sequence ID" value="NC_000963.1"/>
</dbReference>
<dbReference type="SMR" id="Q9ZE81"/>
<dbReference type="STRING" id="272947.gene:17555148"/>
<dbReference type="EnsemblBacteria" id="CAA14536">
    <property type="protein sequence ID" value="CAA14536"/>
    <property type="gene ID" value="CAA14536"/>
</dbReference>
<dbReference type="GeneID" id="57569193"/>
<dbReference type="KEGG" id="rpr:RP065"/>
<dbReference type="PATRIC" id="fig|272947.5.peg.66"/>
<dbReference type="eggNOG" id="COG0018">
    <property type="taxonomic scope" value="Bacteria"/>
</dbReference>
<dbReference type="HOGENOM" id="CLU_006406_0_1_5"/>
<dbReference type="OrthoDB" id="9803211at2"/>
<dbReference type="Proteomes" id="UP000002480">
    <property type="component" value="Chromosome"/>
</dbReference>
<dbReference type="GO" id="GO:0005737">
    <property type="term" value="C:cytoplasm"/>
    <property type="evidence" value="ECO:0007669"/>
    <property type="project" value="UniProtKB-SubCell"/>
</dbReference>
<dbReference type="GO" id="GO:0004814">
    <property type="term" value="F:arginine-tRNA ligase activity"/>
    <property type="evidence" value="ECO:0007669"/>
    <property type="project" value="UniProtKB-UniRule"/>
</dbReference>
<dbReference type="GO" id="GO:0005524">
    <property type="term" value="F:ATP binding"/>
    <property type="evidence" value="ECO:0007669"/>
    <property type="project" value="UniProtKB-UniRule"/>
</dbReference>
<dbReference type="GO" id="GO:0006420">
    <property type="term" value="P:arginyl-tRNA aminoacylation"/>
    <property type="evidence" value="ECO:0007669"/>
    <property type="project" value="UniProtKB-UniRule"/>
</dbReference>
<dbReference type="CDD" id="cd00671">
    <property type="entry name" value="ArgRS_core"/>
    <property type="match status" value="1"/>
</dbReference>
<dbReference type="Gene3D" id="3.30.1360.70">
    <property type="entry name" value="Arginyl tRNA synthetase N-terminal domain"/>
    <property type="match status" value="1"/>
</dbReference>
<dbReference type="Gene3D" id="3.40.50.620">
    <property type="entry name" value="HUPs"/>
    <property type="match status" value="1"/>
</dbReference>
<dbReference type="Gene3D" id="1.10.730.10">
    <property type="entry name" value="Isoleucyl-tRNA Synthetase, Domain 1"/>
    <property type="match status" value="1"/>
</dbReference>
<dbReference type="HAMAP" id="MF_00123">
    <property type="entry name" value="Arg_tRNA_synth"/>
    <property type="match status" value="1"/>
</dbReference>
<dbReference type="InterPro" id="IPR001412">
    <property type="entry name" value="aa-tRNA-synth_I_CS"/>
</dbReference>
<dbReference type="InterPro" id="IPR001278">
    <property type="entry name" value="Arg-tRNA-ligase"/>
</dbReference>
<dbReference type="InterPro" id="IPR005148">
    <property type="entry name" value="Arg-tRNA-synth_N"/>
</dbReference>
<dbReference type="InterPro" id="IPR036695">
    <property type="entry name" value="Arg-tRNA-synth_N_sf"/>
</dbReference>
<dbReference type="InterPro" id="IPR035684">
    <property type="entry name" value="ArgRS_core"/>
</dbReference>
<dbReference type="InterPro" id="IPR008909">
    <property type="entry name" value="DALR_anticod-bd"/>
</dbReference>
<dbReference type="InterPro" id="IPR014729">
    <property type="entry name" value="Rossmann-like_a/b/a_fold"/>
</dbReference>
<dbReference type="InterPro" id="IPR009080">
    <property type="entry name" value="tRNAsynth_Ia_anticodon-bd"/>
</dbReference>
<dbReference type="NCBIfam" id="TIGR00456">
    <property type="entry name" value="argS"/>
    <property type="match status" value="1"/>
</dbReference>
<dbReference type="PANTHER" id="PTHR11956:SF5">
    <property type="entry name" value="ARGININE--TRNA LIGASE, CYTOPLASMIC"/>
    <property type="match status" value="1"/>
</dbReference>
<dbReference type="PANTHER" id="PTHR11956">
    <property type="entry name" value="ARGINYL-TRNA SYNTHETASE"/>
    <property type="match status" value="1"/>
</dbReference>
<dbReference type="Pfam" id="PF03485">
    <property type="entry name" value="Arg_tRNA_synt_N"/>
    <property type="match status" value="1"/>
</dbReference>
<dbReference type="Pfam" id="PF05746">
    <property type="entry name" value="DALR_1"/>
    <property type="match status" value="1"/>
</dbReference>
<dbReference type="Pfam" id="PF00750">
    <property type="entry name" value="tRNA-synt_1d"/>
    <property type="match status" value="1"/>
</dbReference>
<dbReference type="PRINTS" id="PR01038">
    <property type="entry name" value="TRNASYNTHARG"/>
</dbReference>
<dbReference type="SMART" id="SM01016">
    <property type="entry name" value="Arg_tRNA_synt_N"/>
    <property type="match status" value="1"/>
</dbReference>
<dbReference type="SMART" id="SM00836">
    <property type="entry name" value="DALR_1"/>
    <property type="match status" value="1"/>
</dbReference>
<dbReference type="SUPFAM" id="SSF47323">
    <property type="entry name" value="Anticodon-binding domain of a subclass of class I aminoacyl-tRNA synthetases"/>
    <property type="match status" value="1"/>
</dbReference>
<dbReference type="SUPFAM" id="SSF55190">
    <property type="entry name" value="Arginyl-tRNA synthetase (ArgRS), N-terminal 'additional' domain"/>
    <property type="match status" value="1"/>
</dbReference>
<dbReference type="SUPFAM" id="SSF52374">
    <property type="entry name" value="Nucleotidylyl transferase"/>
    <property type="match status" value="1"/>
</dbReference>
<dbReference type="PROSITE" id="PS00178">
    <property type="entry name" value="AA_TRNA_LIGASE_I"/>
    <property type="match status" value="1"/>
</dbReference>
<sequence length="576" mass="65204">MNIFNQLKQDIIAASQKLYNNKEIANTATIETPKDSFNGDLSSNIAMIIASKESIAPREVALKFKEVLVTLPYIASIEIAGPGFINFTIKAESWQAAIKDILQHEEKFFEIDIDKNSNINIEYVSANPTGPMHIGHARGAVYGDVLARILQKVGYSVTKEYYVNDAGSQINDLVSTVLLRYKEALGEPITIPVGLYPGEYLIPLGEILSKEYGNKLLTMNDVERFKIIKSFAVEKMLDLNRKDLADLGIKHDVFFSEQSLYDKGEIEKTVKLLERMGLIYEGTLPAPKGKVHEDWEYRVQKLFKSTNYGDSQDRPIEKADGSWSYFASDLAYAKDKIDRGANHLIYVLGADHSGYVKRIEAIVKALGQEKVKVDVKICQLVNFVENGVPIKMSKRLGSFASVQDVNKEVGKDIIRFMMLTRQNDKPLDFDLVKVKEQSRENPIFYVQYAHVRTKSILSKARELMPEAYNSFKEGKYNLSLLSSEEEIEIIKLLAAWTKTLEASVKYFEPHRIAFYLINLASKFHSMWNFGKENSDYRFIIENNKELTLARLALASVIQKIIASGLEVIGVEPMVTM</sequence>
<keyword id="KW-0030">Aminoacyl-tRNA synthetase</keyword>
<keyword id="KW-0067">ATP-binding</keyword>
<keyword id="KW-0963">Cytoplasm</keyword>
<keyword id="KW-0436">Ligase</keyword>
<keyword id="KW-0547">Nucleotide-binding</keyword>
<keyword id="KW-0648">Protein biosynthesis</keyword>
<keyword id="KW-1185">Reference proteome</keyword>
<name>SYR_RICPR</name>
<comment type="catalytic activity">
    <reaction>
        <text>tRNA(Arg) + L-arginine + ATP = L-arginyl-tRNA(Arg) + AMP + diphosphate</text>
        <dbReference type="Rhea" id="RHEA:20301"/>
        <dbReference type="Rhea" id="RHEA-COMP:9658"/>
        <dbReference type="Rhea" id="RHEA-COMP:9673"/>
        <dbReference type="ChEBI" id="CHEBI:30616"/>
        <dbReference type="ChEBI" id="CHEBI:32682"/>
        <dbReference type="ChEBI" id="CHEBI:33019"/>
        <dbReference type="ChEBI" id="CHEBI:78442"/>
        <dbReference type="ChEBI" id="CHEBI:78513"/>
        <dbReference type="ChEBI" id="CHEBI:456215"/>
        <dbReference type="EC" id="6.1.1.19"/>
    </reaction>
</comment>
<comment type="subunit">
    <text evidence="1">Monomer.</text>
</comment>
<comment type="subcellular location">
    <subcellularLocation>
        <location evidence="1">Cytoplasm</location>
    </subcellularLocation>
</comment>
<comment type="similarity">
    <text evidence="2">Belongs to the class-I aminoacyl-tRNA synthetase family.</text>
</comment>
<organism>
    <name type="scientific">Rickettsia prowazekii (strain Madrid E)</name>
    <dbReference type="NCBI Taxonomy" id="272947"/>
    <lineage>
        <taxon>Bacteria</taxon>
        <taxon>Pseudomonadati</taxon>
        <taxon>Pseudomonadota</taxon>
        <taxon>Alphaproteobacteria</taxon>
        <taxon>Rickettsiales</taxon>
        <taxon>Rickettsiaceae</taxon>
        <taxon>Rickettsieae</taxon>
        <taxon>Rickettsia</taxon>
        <taxon>typhus group</taxon>
    </lineage>
</organism>